<sequence length="1279" mass="138665">MRRHTLAIAILAALASTASVAETSDPQSLLIEQGYYWQSKKNPERALETWQKLLRLSPDQPDALYGIGLIQVQQNHPAEAQKYLARLQALSPVPRQALQLEQDITVAVPDNAKLLEQARELGEPEAEREQAVALYRQIFQGRQPQGLIAREYYNTLGFTAKGSSEAIAGLQRLTRERPNDPIVALFLAKHLARNPATRPDGIRALAKLASNNDVGGNADETWRFALVWLGPPKPDQVSLFQQFLTVHPDDSEIRALMNKGIAQGKGGGTWQRDPQMTKAFKALDDGDLKTAEPLLAARLAQKSNDVDALGGMGVLRQQQERYSEAENYLVQATRLPGGAAWQSALNDVRYWNLISQSRDAQRAGRSAQARDLVAQAERLNPGQPGAAIALAGFQAQDNQFDDAEAGYRKVLARHPGDPDALSGLINVLSQSGQPDEALKLIDSVSPAQRAKFAPSVKINALRATQVGKLAEQRGDLKAAQAAYRQALDADPENPWTRFALARMYLRDGQIRNARALIDGLLKSQPNQPDALYTSTLLSAQLSEWKQAEATLGRIPTAQRTADMNELATDIALHQQTDIAIETARRGQRPEALALLGRSEPLTRNKPERVAVLAAAYVEVGAAQYGLDMMQKVVENNPNPTVDQKLLYANVLLKANKYSEAGEILREVQGQPLTETGRQRYDDLIYLYRVKQADALREKNDLVAAYDMLSPALAQRPNDALGVGALARMYAASGNGKKAMELYAPLIQQNPNNARLQLGLADIALKGNDRGLAQSASDKALALEPGNPEILTSAARIYQGLGKNSEAAELLRKALAIENAMKAKTQVAQASAPGTSYNPFVGLPGQRRQVTDLTVAGAVPPPIDAPTKSVTSNAFASATSNDLSDPFVPPSSIASIDSPELSPARRALDTILRDRTGYVVQGLSVRSNNGEKGLSKITDVEAPFEARMPVGDNTVALRVTPVHLSAGSVKAESLSRFGKGGTEPAGSQSDSGVGLAVAFENPDQGLKADVGVSPLGFLYNTLVGGVSVSRPFEANSNFRYGANISRRPVTDSVTSFAGSEDGAGNKWGGVTANGGRGELSYDNQKLGVYGYASLHELLGNNVEDNTRLELGSGIYWYLRNNPRDTLTLGISGSAMTFKENQDFYTYGNGGYFSPQRFFSLGVPIRWAQSFDRFSYQVKSSVGLQHIAQDGADYFPGDSTLQATKNNPKYDSTSKTGVGYSFNAAAEYRLSSRFYLGGEIGLDNAQDYRQYAGNAYLRYLFEDLSGPMPLPVSPYRSPYSN</sequence>
<proteinExistence type="inferred from homology"/>
<protein>
    <recommendedName>
        <fullName>Cellulose synthase operon protein C</fullName>
    </recommendedName>
</protein>
<feature type="signal peptide" evidence="2">
    <location>
        <begin position="1"/>
        <end position="21"/>
    </location>
</feature>
<feature type="chain" id="PRO_0000035690" description="Cellulose synthase operon protein C">
    <location>
        <begin position="22"/>
        <end position="1279"/>
    </location>
</feature>
<feature type="repeat" description="TPR 1">
    <location>
        <begin position="27"/>
        <end position="60"/>
    </location>
</feature>
<feature type="repeat" description="TPR 2">
    <location>
        <begin position="62"/>
        <end position="94"/>
    </location>
</feature>
<feature type="repeat" description="TPR 3">
    <location>
        <begin position="218"/>
        <end position="250"/>
    </location>
</feature>
<feature type="repeat" description="TPR 4">
    <location>
        <begin position="306"/>
        <end position="339"/>
    </location>
</feature>
<feature type="repeat" description="TPR 5">
    <location>
        <begin position="384"/>
        <end position="417"/>
    </location>
</feature>
<feature type="repeat" description="TPR 6">
    <location>
        <begin position="460"/>
        <end position="493"/>
    </location>
</feature>
<feature type="repeat" description="TPR 7">
    <location>
        <begin position="495"/>
        <end position="527"/>
    </location>
</feature>
<feature type="repeat" description="TPR 8">
    <location>
        <begin position="606"/>
        <end position="639"/>
    </location>
</feature>
<feature type="repeat" description="TPR 9">
    <location>
        <begin position="719"/>
        <end position="752"/>
    </location>
</feature>
<feature type="repeat" description="TPR 10">
    <location>
        <begin position="787"/>
        <end position="820"/>
    </location>
</feature>
<comment type="function">
    <text evidence="1">Required for maximal bacterial cellulose synthesis.</text>
</comment>
<comment type="pathway">
    <text>Glycan metabolism; bacterial cellulose biosynthesis.</text>
</comment>
<evidence type="ECO:0000250" key="1"/>
<evidence type="ECO:0000255" key="2"/>
<gene>
    <name type="primary">bscS</name>
    <name type="synonym">wssE</name>
    <name type="ordered locus">PFLU_0304</name>
</gene>
<reference key="1">
    <citation type="journal article" date="2002" name="Genetics">
        <title>Adaptive divergence in experimental populations of Pseudomonas fluorescens. I. Genetic and phenotypic bases of wrinkly spreader fitness.</title>
        <authorList>
            <person name="Spiers A.J."/>
            <person name="Kahn S.G."/>
            <person name="Bohannon J."/>
            <person name="Travisano M."/>
            <person name="Rainey P.B."/>
        </authorList>
    </citation>
    <scope>NUCLEOTIDE SEQUENCE [GENOMIC DNA]</scope>
</reference>
<reference key="2">
    <citation type="journal article" date="2009" name="Genome Biol.">
        <title>Genomic and genetic analyses of diversity and plant interactions of Pseudomonas fluorescens.</title>
        <authorList>
            <person name="Silby M.W."/>
            <person name="Cerdeno-Tarraga A.M."/>
            <person name="Vernikos G.S."/>
            <person name="Giddens S.R."/>
            <person name="Jackson R.W."/>
            <person name="Preston G.M."/>
            <person name="Zhang X.-X."/>
            <person name="Moon C.D."/>
            <person name="Gehrig S.M."/>
            <person name="Godfrey S.A.C."/>
            <person name="Knight C.G."/>
            <person name="Malone J.G."/>
            <person name="Robinson Z."/>
            <person name="Spiers A.J."/>
            <person name="Harris S."/>
            <person name="Challis G.L."/>
            <person name="Yaxley A.M."/>
            <person name="Harris D."/>
            <person name="Seeger K."/>
            <person name="Murphy L."/>
            <person name="Rutter S."/>
            <person name="Squares R."/>
            <person name="Quail M.A."/>
            <person name="Saunders E."/>
            <person name="Mavromatis K."/>
            <person name="Brettin T.S."/>
            <person name="Bentley S.D."/>
            <person name="Hothersall J."/>
            <person name="Stephens E."/>
            <person name="Thomas C.M."/>
            <person name="Parkhill J."/>
            <person name="Levy S.B."/>
            <person name="Rainey P.B."/>
            <person name="Thomson N.R."/>
        </authorList>
    </citation>
    <scope>NUCLEOTIDE SEQUENCE [LARGE SCALE GENOMIC DNA]</scope>
    <source>
        <strain>SBW25</strain>
    </source>
</reference>
<organism>
    <name type="scientific">Pseudomonas fluorescens (strain SBW25)</name>
    <dbReference type="NCBI Taxonomy" id="216595"/>
    <lineage>
        <taxon>Bacteria</taxon>
        <taxon>Pseudomonadati</taxon>
        <taxon>Pseudomonadota</taxon>
        <taxon>Gammaproteobacteria</taxon>
        <taxon>Pseudomonadales</taxon>
        <taxon>Pseudomonadaceae</taxon>
        <taxon>Pseudomonas</taxon>
    </lineage>
</organism>
<dbReference type="EMBL" id="AY074776">
    <property type="protein sequence ID" value="AAL71845.1"/>
    <property type="molecule type" value="Genomic_DNA"/>
</dbReference>
<dbReference type="EMBL" id="AM181176">
    <property type="protein sequence ID" value="CAY46581.1"/>
    <property type="molecule type" value="Genomic_DNA"/>
</dbReference>
<dbReference type="RefSeq" id="WP_012721725.1">
    <property type="nucleotide sequence ID" value="NC_012660.1"/>
</dbReference>
<dbReference type="SMR" id="P58937"/>
<dbReference type="PATRIC" id="fig|216595.4.peg.537"/>
<dbReference type="eggNOG" id="COG0457">
    <property type="taxonomic scope" value="Bacteria"/>
</dbReference>
<dbReference type="HOGENOM" id="CLU_001631_1_0_6"/>
<dbReference type="OrthoDB" id="174989at2"/>
<dbReference type="UniPathway" id="UPA00694"/>
<dbReference type="GO" id="GO:0019867">
    <property type="term" value="C:outer membrane"/>
    <property type="evidence" value="ECO:0007669"/>
    <property type="project" value="InterPro"/>
</dbReference>
<dbReference type="GO" id="GO:0030244">
    <property type="term" value="P:cellulose biosynthetic process"/>
    <property type="evidence" value="ECO:0007669"/>
    <property type="project" value="UniProtKB-KW"/>
</dbReference>
<dbReference type="GO" id="GO:0006011">
    <property type="term" value="P:UDP-alpha-D-glucose metabolic process"/>
    <property type="evidence" value="ECO:0007669"/>
    <property type="project" value="InterPro"/>
</dbReference>
<dbReference type="Gene3D" id="1.25.40.10">
    <property type="entry name" value="Tetratricopeptide repeat domain"/>
    <property type="match status" value="4"/>
</dbReference>
<dbReference type="InterPro" id="IPR008410">
    <property type="entry name" value="BCSC_C"/>
</dbReference>
<dbReference type="InterPro" id="IPR003921">
    <property type="entry name" value="Cell_synth_C"/>
</dbReference>
<dbReference type="InterPro" id="IPR011990">
    <property type="entry name" value="TPR-like_helical_dom_sf"/>
</dbReference>
<dbReference type="InterPro" id="IPR019734">
    <property type="entry name" value="TPR_rpt"/>
</dbReference>
<dbReference type="PANTHER" id="PTHR12558">
    <property type="entry name" value="CELL DIVISION CYCLE 16,23,27"/>
    <property type="match status" value="1"/>
</dbReference>
<dbReference type="PANTHER" id="PTHR12558:SF13">
    <property type="entry name" value="CELL DIVISION CYCLE PROTEIN 27 HOMOLOG"/>
    <property type="match status" value="1"/>
</dbReference>
<dbReference type="Pfam" id="PF05420">
    <property type="entry name" value="BCSC_C"/>
    <property type="match status" value="1"/>
</dbReference>
<dbReference type="Pfam" id="PF13432">
    <property type="entry name" value="TPR_16"/>
    <property type="match status" value="1"/>
</dbReference>
<dbReference type="Pfam" id="PF14559">
    <property type="entry name" value="TPR_19"/>
    <property type="match status" value="3"/>
</dbReference>
<dbReference type="Pfam" id="PF13181">
    <property type="entry name" value="TPR_8"/>
    <property type="match status" value="1"/>
</dbReference>
<dbReference type="PRINTS" id="PR01441">
    <property type="entry name" value="CELLSNTHASEC"/>
</dbReference>
<dbReference type="SMART" id="SM00028">
    <property type="entry name" value="TPR"/>
    <property type="match status" value="11"/>
</dbReference>
<dbReference type="SUPFAM" id="SSF48452">
    <property type="entry name" value="TPR-like"/>
    <property type="match status" value="3"/>
</dbReference>
<dbReference type="PROSITE" id="PS50005">
    <property type="entry name" value="TPR"/>
    <property type="match status" value="10"/>
</dbReference>
<dbReference type="PROSITE" id="PS50293">
    <property type="entry name" value="TPR_REGION"/>
    <property type="match status" value="2"/>
</dbReference>
<accession>P58937</accession>
<accession>C3K6B3</accession>
<accession>Q8RSY8</accession>
<name>BCSC_PSEFS</name>
<keyword id="KW-0135">Cellulose biosynthesis</keyword>
<keyword id="KW-0677">Repeat</keyword>
<keyword id="KW-0732">Signal</keyword>
<keyword id="KW-0802">TPR repeat</keyword>